<reference key="1">
    <citation type="journal article" date="2010" name="PLoS ONE">
        <title>Genome sequence of Cronobacter sakazakii BAA-894 and comparative genomic hybridization analysis with other Cronobacter species.</title>
        <authorList>
            <person name="Kucerova E."/>
            <person name="Clifton S.W."/>
            <person name="Xia X.Q."/>
            <person name="Long F."/>
            <person name="Porwollik S."/>
            <person name="Fulton L."/>
            <person name="Fronick C."/>
            <person name="Minx P."/>
            <person name="Kyung K."/>
            <person name="Warren W."/>
            <person name="Fulton R."/>
            <person name="Feng D."/>
            <person name="Wollam A."/>
            <person name="Shah N."/>
            <person name="Bhonagiri V."/>
            <person name="Nash W.E."/>
            <person name="Hallsworth-Pepin K."/>
            <person name="Wilson R.K."/>
            <person name="McClelland M."/>
            <person name="Forsythe S.J."/>
        </authorList>
    </citation>
    <scope>NUCLEOTIDE SEQUENCE [LARGE SCALE GENOMIC DNA]</scope>
    <source>
        <strain>ATCC BAA-894</strain>
    </source>
</reference>
<comment type="function">
    <text evidence="1">Involved in the transport of maltose and maltodextrins.</text>
</comment>
<comment type="catalytic activity">
    <reaction evidence="1">
        <text>beta-maltose(in) = beta-maltose(out)</text>
        <dbReference type="Rhea" id="RHEA:29731"/>
        <dbReference type="ChEBI" id="CHEBI:18147"/>
    </reaction>
</comment>
<comment type="subunit">
    <text evidence="1">Homotrimer formed of three 18-stranded antiparallel beta-barrels, containing three independent channels.</text>
</comment>
<comment type="subcellular location">
    <subcellularLocation>
        <location evidence="1">Cell outer membrane</location>
        <topology evidence="1">Multi-pass membrane protein</topology>
    </subcellularLocation>
</comment>
<comment type="induction">
    <text evidence="1">By maltose.</text>
</comment>
<comment type="similarity">
    <text evidence="1">Belongs to the porin LamB (TC 1.B.3) family.</text>
</comment>
<comment type="sequence caution" evidence="2">
    <conflict type="erroneous initiation">
        <sequence resource="EMBL-CDS" id="ABU75388"/>
    </conflict>
</comment>
<gene>
    <name evidence="1" type="primary">lamB</name>
    <name type="ordered locus">ESA_00083</name>
</gene>
<protein>
    <recommendedName>
        <fullName evidence="1">Maltoporin</fullName>
    </recommendedName>
    <alternativeName>
        <fullName evidence="1">Maltose-inducible porin</fullName>
    </alternativeName>
</protein>
<proteinExistence type="inferred from homology"/>
<evidence type="ECO:0000255" key="1">
    <source>
        <dbReference type="HAMAP-Rule" id="MF_01301"/>
    </source>
</evidence>
<evidence type="ECO:0000305" key="2"/>
<keyword id="KW-0998">Cell outer membrane</keyword>
<keyword id="KW-0406">Ion transport</keyword>
<keyword id="KW-0472">Membrane</keyword>
<keyword id="KW-0626">Porin</keyword>
<keyword id="KW-1185">Reference proteome</keyword>
<keyword id="KW-0732">Signal</keyword>
<keyword id="KW-0762">Sugar transport</keyword>
<keyword id="KW-0812">Transmembrane</keyword>
<keyword id="KW-1134">Transmembrane beta strand</keyword>
<keyword id="KW-0813">Transport</keyword>
<sequence length="448" mass="49744">MMITLRKLPLAVAVMAGIFAAQASAVDFKGYARSGIGWTGSGGEQQCFQATGAGAKYRLGNECETYAELKLGQEVWKEGDKSFYFDTNVAYSVAQQNDWEATSPAFREANVQGKNLIDALPGSTIWAGKRFYQRHDVHMIDFYYWDISGPGAGIENVDLGFGKLSVAATRSSEAGGSATFQSDSIYDYNKSTANDVFDVRLGSLEVNPGGTLELGVDYGRANARDDYYLADDATKDGWMFTAEHVQTIGTGFNKFVVQYATDALTSQGKGLSQGSGIGISDTDPKFAYAQNNNGHMLRLIDHGSISMGDRWDMMYVGMYQDIDWDNNNGTRWWTVGVRPMFKWTPIMSTLLEVGYDNVKSQRTDETNNQYKITLAQQWQAGDSIWSRPALRVFATYAKWDEKWGYDKTGNPSNNANYGYAVKDGFNGGSFGRGDNDEWTFGAQMEIWW</sequence>
<feature type="signal peptide" evidence="1">
    <location>
        <begin position="1"/>
        <end position="25"/>
    </location>
</feature>
<feature type="chain" id="PRO_0000322012" description="Maltoporin" evidence="1">
    <location>
        <begin position="26"/>
        <end position="448"/>
    </location>
</feature>
<feature type="site" description="Greasy slide, important in sugar transport" evidence="1">
    <location>
        <position position="31"/>
    </location>
</feature>
<feature type="site" description="Greasy slide, important in sugar transport" evidence="1">
    <location>
        <position position="66"/>
    </location>
</feature>
<feature type="site" description="Greasy slide, important in sugar transport" evidence="1">
    <location>
        <position position="99"/>
    </location>
</feature>
<feature type="site" description="Important in sugar transport" evidence="1">
    <location>
        <position position="143"/>
    </location>
</feature>
<feature type="site" description="Greasy slide, important in sugar transport" evidence="1">
    <location>
        <position position="252"/>
    </location>
</feature>
<feature type="site" description="Greasy slide, important in sugar transport" evidence="1">
    <location>
        <position position="385"/>
    </location>
</feature>
<feature type="site" description="Greasy slide, important in sugar transport" evidence="1">
    <location>
        <position position="447"/>
    </location>
</feature>
<organism>
    <name type="scientific">Cronobacter sakazakii (strain ATCC BAA-894)</name>
    <name type="common">Enterobacter sakazakii</name>
    <dbReference type="NCBI Taxonomy" id="290339"/>
    <lineage>
        <taxon>Bacteria</taxon>
        <taxon>Pseudomonadati</taxon>
        <taxon>Pseudomonadota</taxon>
        <taxon>Gammaproteobacteria</taxon>
        <taxon>Enterobacterales</taxon>
        <taxon>Enterobacteriaceae</taxon>
        <taxon>Cronobacter</taxon>
    </lineage>
</organism>
<accession>A7MPN7</accession>
<name>LAMB_CROS8</name>
<dbReference type="EMBL" id="CP000783">
    <property type="protein sequence ID" value="ABU75388.1"/>
    <property type="status" value="ALT_INIT"/>
    <property type="molecule type" value="Genomic_DNA"/>
</dbReference>
<dbReference type="RefSeq" id="WP_007888874.1">
    <property type="nucleotide sequence ID" value="NC_009778.1"/>
</dbReference>
<dbReference type="SMR" id="A7MPN7"/>
<dbReference type="KEGG" id="esa:ESA_00083"/>
<dbReference type="HOGENOM" id="CLU_032473_4_1_6"/>
<dbReference type="Proteomes" id="UP000000260">
    <property type="component" value="Chromosome"/>
</dbReference>
<dbReference type="GO" id="GO:0009279">
    <property type="term" value="C:cell outer membrane"/>
    <property type="evidence" value="ECO:0007669"/>
    <property type="project" value="UniProtKB-SubCell"/>
</dbReference>
<dbReference type="GO" id="GO:0046930">
    <property type="term" value="C:pore complex"/>
    <property type="evidence" value="ECO:0007669"/>
    <property type="project" value="UniProtKB-KW"/>
</dbReference>
<dbReference type="GO" id="GO:0042958">
    <property type="term" value="F:maltodextrin transmembrane transporter activity"/>
    <property type="evidence" value="ECO:0007669"/>
    <property type="project" value="InterPro"/>
</dbReference>
<dbReference type="GO" id="GO:0015481">
    <property type="term" value="F:maltose transporting porin activity"/>
    <property type="evidence" value="ECO:0007669"/>
    <property type="project" value="InterPro"/>
</dbReference>
<dbReference type="GO" id="GO:0006811">
    <property type="term" value="P:monoatomic ion transport"/>
    <property type="evidence" value="ECO:0007669"/>
    <property type="project" value="UniProtKB-KW"/>
</dbReference>
<dbReference type="CDD" id="cd01346">
    <property type="entry name" value="Maltoporin-like"/>
    <property type="match status" value="1"/>
</dbReference>
<dbReference type="FunFam" id="2.40.170.10:FF:000001">
    <property type="entry name" value="Maltoporin"/>
    <property type="match status" value="1"/>
</dbReference>
<dbReference type="Gene3D" id="2.40.170.10">
    <property type="entry name" value="Porin, LamB type"/>
    <property type="match status" value="1"/>
</dbReference>
<dbReference type="HAMAP" id="MF_01301">
    <property type="entry name" value="LamB"/>
    <property type="match status" value="1"/>
</dbReference>
<dbReference type="InterPro" id="IPR050286">
    <property type="entry name" value="G_neg_Bact_CarbUptk_Porin"/>
</dbReference>
<dbReference type="InterPro" id="IPR023738">
    <property type="entry name" value="Maltoporin"/>
</dbReference>
<dbReference type="InterPro" id="IPR003192">
    <property type="entry name" value="Porin_LamB"/>
</dbReference>
<dbReference type="InterPro" id="IPR036998">
    <property type="entry name" value="Porin_LamB_sf"/>
</dbReference>
<dbReference type="NCBIfam" id="NF006860">
    <property type="entry name" value="PRK09360.1"/>
    <property type="match status" value="1"/>
</dbReference>
<dbReference type="PANTHER" id="PTHR38762">
    <property type="entry name" value="CRYPTIC OUTER MEMBRANE PORIN BGLH-RELATED"/>
    <property type="match status" value="1"/>
</dbReference>
<dbReference type="PANTHER" id="PTHR38762:SF1">
    <property type="entry name" value="CRYPTIC OUTER MEMBRANE PORIN BGLH-RELATED"/>
    <property type="match status" value="1"/>
</dbReference>
<dbReference type="Pfam" id="PF02264">
    <property type="entry name" value="LamB"/>
    <property type="match status" value="1"/>
</dbReference>
<dbReference type="SUPFAM" id="SSF56935">
    <property type="entry name" value="Porins"/>
    <property type="match status" value="1"/>
</dbReference>